<sequence>MLEKFTVIRGKAVPLRGEDIDTDRILPARFMKVLTFEGLGQYLFYDERFDEKGNPKPHPLNDPRYRGATILLVESGFGSGSSREHAPQAIKRAGFKAIIGESFAEIFFGNATAIGLPCVSLAPEDLGVLFRSVEENPELEVEIDLVNKEVRFGDRTAPLFIREEAREALVEGLWDPIGELLEAGELLDQFDRKLPYPRRTE</sequence>
<accession>Q9ZND4</accession>
<accession>Q5SIY5</accession>
<evidence type="ECO:0000250" key="1"/>
<evidence type="ECO:0000305" key="2"/>
<proteinExistence type="inferred from homology"/>
<dbReference type="EC" id="4.2.1.33"/>
<dbReference type="EMBL" id="AB017135">
    <property type="protein sequence ID" value="BAA37139.1"/>
    <property type="molecule type" value="Genomic_DNA"/>
</dbReference>
<dbReference type="EMBL" id="AP008226">
    <property type="protein sequence ID" value="BAD71052.1"/>
    <property type="molecule type" value="Genomic_DNA"/>
</dbReference>
<dbReference type="RefSeq" id="WP_011228533.1">
    <property type="nucleotide sequence ID" value="NC_006461.1"/>
</dbReference>
<dbReference type="RefSeq" id="YP_144495.1">
    <property type="nucleotide sequence ID" value="NC_006461.1"/>
</dbReference>
<dbReference type="SMR" id="Q9ZND4"/>
<dbReference type="EnsemblBacteria" id="BAD71052">
    <property type="protein sequence ID" value="BAD71052"/>
    <property type="gene ID" value="BAD71052"/>
</dbReference>
<dbReference type="GeneID" id="3168995"/>
<dbReference type="KEGG" id="ttj:TTHA1229"/>
<dbReference type="PATRIC" id="fig|300852.9.peg.1208"/>
<dbReference type="eggNOG" id="COG0066">
    <property type="taxonomic scope" value="Bacteria"/>
</dbReference>
<dbReference type="HOGENOM" id="CLU_081378_0_0_0"/>
<dbReference type="PhylomeDB" id="Q9ZND4"/>
<dbReference type="UniPathway" id="UPA00048">
    <property type="reaction ID" value="UER00071"/>
</dbReference>
<dbReference type="Proteomes" id="UP000000532">
    <property type="component" value="Chromosome"/>
</dbReference>
<dbReference type="GO" id="GO:0009316">
    <property type="term" value="C:3-isopropylmalate dehydratase complex"/>
    <property type="evidence" value="ECO:0007669"/>
    <property type="project" value="InterPro"/>
</dbReference>
<dbReference type="GO" id="GO:0003861">
    <property type="term" value="F:3-isopropylmalate dehydratase activity"/>
    <property type="evidence" value="ECO:0007669"/>
    <property type="project" value="UniProtKB-UniRule"/>
</dbReference>
<dbReference type="GO" id="GO:0009098">
    <property type="term" value="P:L-leucine biosynthetic process"/>
    <property type="evidence" value="ECO:0007669"/>
    <property type="project" value="UniProtKB-UniRule"/>
</dbReference>
<dbReference type="CDD" id="cd01577">
    <property type="entry name" value="IPMI_Swivel"/>
    <property type="match status" value="1"/>
</dbReference>
<dbReference type="Gene3D" id="3.20.19.10">
    <property type="entry name" value="Aconitase, domain 4"/>
    <property type="match status" value="1"/>
</dbReference>
<dbReference type="HAMAP" id="MF_01031">
    <property type="entry name" value="LeuD_type1"/>
    <property type="match status" value="1"/>
</dbReference>
<dbReference type="InterPro" id="IPR004431">
    <property type="entry name" value="3-IsopropMal_deHydase_ssu"/>
</dbReference>
<dbReference type="InterPro" id="IPR015928">
    <property type="entry name" value="Aconitase/3IPM_dehydase_swvl"/>
</dbReference>
<dbReference type="InterPro" id="IPR000573">
    <property type="entry name" value="AconitaseA/IPMdHydase_ssu_swvl"/>
</dbReference>
<dbReference type="InterPro" id="IPR033940">
    <property type="entry name" value="IPMI_Swivel"/>
</dbReference>
<dbReference type="InterPro" id="IPR050075">
    <property type="entry name" value="LeuD"/>
</dbReference>
<dbReference type="NCBIfam" id="TIGR00171">
    <property type="entry name" value="leuD"/>
    <property type="match status" value="1"/>
</dbReference>
<dbReference type="NCBIfam" id="NF002458">
    <property type="entry name" value="PRK01641.1"/>
    <property type="match status" value="1"/>
</dbReference>
<dbReference type="PANTHER" id="PTHR43345:SF5">
    <property type="entry name" value="3-ISOPROPYLMALATE DEHYDRATASE SMALL SUBUNIT"/>
    <property type="match status" value="1"/>
</dbReference>
<dbReference type="PANTHER" id="PTHR43345">
    <property type="entry name" value="3-ISOPROPYLMALATE DEHYDRATASE SMALL SUBUNIT 2-RELATED-RELATED"/>
    <property type="match status" value="1"/>
</dbReference>
<dbReference type="Pfam" id="PF00694">
    <property type="entry name" value="Aconitase_C"/>
    <property type="match status" value="1"/>
</dbReference>
<dbReference type="SUPFAM" id="SSF52016">
    <property type="entry name" value="LeuD/IlvD-like"/>
    <property type="match status" value="1"/>
</dbReference>
<organism>
    <name type="scientific">Thermus thermophilus (strain ATCC 27634 / DSM 579 / HB8)</name>
    <dbReference type="NCBI Taxonomy" id="300852"/>
    <lineage>
        <taxon>Bacteria</taxon>
        <taxon>Thermotogati</taxon>
        <taxon>Deinococcota</taxon>
        <taxon>Deinococci</taxon>
        <taxon>Thermales</taxon>
        <taxon>Thermaceae</taxon>
        <taxon>Thermus</taxon>
    </lineage>
</organism>
<gene>
    <name type="primary">leuD</name>
    <name type="ordered locus">TTHA1229</name>
</gene>
<keyword id="KW-0028">Amino-acid biosynthesis</keyword>
<keyword id="KW-0100">Branched-chain amino acid biosynthesis</keyword>
<keyword id="KW-0432">Leucine biosynthesis</keyword>
<keyword id="KW-0456">Lyase</keyword>
<keyword id="KW-1185">Reference proteome</keyword>
<comment type="function">
    <text evidence="1">Catalyzes the isomerization between 2-isopropylmalate and 3-isopropylmalate, via the formation of 2-isopropylmaleate.</text>
</comment>
<comment type="catalytic activity">
    <reaction>
        <text>(2R,3S)-3-isopropylmalate = (2S)-2-isopropylmalate</text>
        <dbReference type="Rhea" id="RHEA:32287"/>
        <dbReference type="ChEBI" id="CHEBI:1178"/>
        <dbReference type="ChEBI" id="CHEBI:35121"/>
        <dbReference type="EC" id="4.2.1.33"/>
    </reaction>
</comment>
<comment type="pathway">
    <text>Amino-acid biosynthesis; L-leucine biosynthesis; L-leucine from 3-methyl-2-oxobutanoate: step 2/4.</text>
</comment>
<comment type="subunit">
    <text>Heterodimer of LeuC and LeuD.</text>
</comment>
<comment type="similarity">
    <text evidence="2">Belongs to the LeuD family. LeuD type 1 subfamily.</text>
</comment>
<feature type="chain" id="PRO_0000141903" description="3-isopropylmalate dehydratase small subunit">
    <location>
        <begin position="1"/>
        <end position="201"/>
    </location>
</feature>
<name>LEUD_THET8</name>
<reference key="1">
    <citation type="journal article" date="1998" name="Gene">
        <title>The organization of the leuC, leuD and leuB genes of the extreme thermophile, Thermus thermophilus.</title>
        <authorList>
            <person name="Tamakoshi M."/>
            <person name="Yamagishi A."/>
            <person name="Oshima T."/>
        </authorList>
    </citation>
    <scope>NUCLEOTIDE SEQUENCE [GENOMIC DNA]</scope>
</reference>
<reference key="2">
    <citation type="submission" date="2004-11" db="EMBL/GenBank/DDBJ databases">
        <title>Complete genome sequence of Thermus thermophilus HB8.</title>
        <authorList>
            <person name="Masui R."/>
            <person name="Kurokawa K."/>
            <person name="Nakagawa N."/>
            <person name="Tokunaga F."/>
            <person name="Koyama Y."/>
            <person name="Shibata T."/>
            <person name="Oshima T."/>
            <person name="Yokoyama S."/>
            <person name="Yasunaga T."/>
            <person name="Kuramitsu S."/>
        </authorList>
    </citation>
    <scope>NUCLEOTIDE SEQUENCE [LARGE SCALE GENOMIC DNA]</scope>
    <source>
        <strain>ATCC 27634 / DSM 579 / HB8</strain>
    </source>
</reference>
<protein>
    <recommendedName>
        <fullName>3-isopropylmalate dehydratase small subunit</fullName>
        <ecNumber>4.2.1.33</ecNumber>
    </recommendedName>
    <alternativeName>
        <fullName>Alpha-IPM isomerase</fullName>
        <shortName>IPMI</shortName>
    </alternativeName>
    <alternativeName>
        <fullName>Isopropylmalate isomerase</fullName>
    </alternativeName>
</protein>